<evidence type="ECO:0000256" key="1">
    <source>
        <dbReference type="SAM" id="MobiDB-lite"/>
    </source>
</evidence>
<evidence type="ECO:0000269" key="2">
    <source>
    </source>
</evidence>
<evidence type="ECO:0000269" key="3">
    <source>
    </source>
</evidence>
<evidence type="ECO:0000303" key="4">
    <source>
    </source>
</evidence>
<evidence type="ECO:0000303" key="5">
    <source>
    </source>
</evidence>
<evidence type="ECO:0000305" key="6"/>
<evidence type="ECO:0000312" key="7">
    <source>
        <dbReference type="Araport" id="AT5G44150"/>
    </source>
</evidence>
<evidence type="ECO:0000312" key="8">
    <source>
        <dbReference type="EMBL" id="BAB10982.1"/>
    </source>
</evidence>
<gene>
    <name evidence="5" type="primary">CER16</name>
    <name evidence="4" type="synonym">RIPR</name>
    <name evidence="7" type="ordered locus">At5g44150</name>
    <name evidence="8" type="ORF">MLN1.7</name>
</gene>
<proteinExistence type="evidence at protein level"/>
<reference key="1">
    <citation type="journal article" date="1997" name="DNA Res.">
        <title>Structural analysis of Arabidopsis thaliana chromosome 5. I. Sequence features of the 1.6 Mb regions covered by twenty physically assigned P1 clones.</title>
        <authorList>
            <person name="Sato S."/>
            <person name="Kotani H."/>
            <person name="Nakamura Y."/>
            <person name="Kaneko T."/>
            <person name="Asamizu E."/>
            <person name="Fukami M."/>
            <person name="Miyajima N."/>
            <person name="Tabata S."/>
        </authorList>
    </citation>
    <scope>NUCLEOTIDE SEQUENCE [LARGE SCALE GENOMIC DNA]</scope>
    <source>
        <strain>cv. Columbia</strain>
    </source>
</reference>
<reference key="2">
    <citation type="journal article" date="2017" name="Plant J.">
        <title>Araport11: a complete reannotation of the Arabidopsis thaliana reference genome.</title>
        <authorList>
            <person name="Cheng C.Y."/>
            <person name="Krishnakumar V."/>
            <person name="Chan A.P."/>
            <person name="Thibaud-Nissen F."/>
            <person name="Schobel S."/>
            <person name="Town C.D."/>
        </authorList>
    </citation>
    <scope>GENOME REANNOTATION</scope>
    <source>
        <strain>cv. Columbia</strain>
    </source>
</reference>
<reference key="3">
    <citation type="journal article" date="2003" name="Science">
        <title>Empirical analysis of transcriptional activity in the Arabidopsis genome.</title>
        <authorList>
            <person name="Yamada K."/>
            <person name="Lim J."/>
            <person name="Dale J.M."/>
            <person name="Chen H."/>
            <person name="Shinn P."/>
            <person name="Palm C.J."/>
            <person name="Southwick A.M."/>
            <person name="Wu H.C."/>
            <person name="Kim C.J."/>
            <person name="Nguyen M."/>
            <person name="Pham P.K."/>
            <person name="Cheuk R.F."/>
            <person name="Karlin-Newmann G."/>
            <person name="Liu S.X."/>
            <person name="Lam B."/>
            <person name="Sakano H."/>
            <person name="Wu T."/>
            <person name="Yu G."/>
            <person name="Miranda M."/>
            <person name="Quach H.L."/>
            <person name="Tripp M."/>
            <person name="Chang C.H."/>
            <person name="Lee J.M."/>
            <person name="Toriumi M.J."/>
            <person name="Chan M.M."/>
            <person name="Tang C.C."/>
            <person name="Onodera C.S."/>
            <person name="Deng J.M."/>
            <person name="Akiyama K."/>
            <person name="Ansari Y."/>
            <person name="Arakawa T."/>
            <person name="Banh J."/>
            <person name="Banno F."/>
            <person name="Bowser L."/>
            <person name="Brooks S.Y."/>
            <person name="Carninci P."/>
            <person name="Chao Q."/>
            <person name="Choy N."/>
            <person name="Enju A."/>
            <person name="Goldsmith A.D."/>
            <person name="Gurjal M."/>
            <person name="Hansen N.F."/>
            <person name="Hayashizaki Y."/>
            <person name="Johnson-Hopson C."/>
            <person name="Hsuan V.W."/>
            <person name="Iida K."/>
            <person name="Karnes M."/>
            <person name="Khan S."/>
            <person name="Koesema E."/>
            <person name="Ishida J."/>
            <person name="Jiang P.X."/>
            <person name="Jones T."/>
            <person name="Kawai J."/>
            <person name="Kamiya A."/>
            <person name="Meyers C."/>
            <person name="Nakajima M."/>
            <person name="Narusaka M."/>
            <person name="Seki M."/>
            <person name="Sakurai T."/>
            <person name="Satou M."/>
            <person name="Tamse R."/>
            <person name="Vaysberg M."/>
            <person name="Wallender E.K."/>
            <person name="Wong C."/>
            <person name="Yamamura Y."/>
            <person name="Yuan S."/>
            <person name="Shinozaki K."/>
            <person name="Davis R.W."/>
            <person name="Theologis A."/>
            <person name="Ecker J.R."/>
        </authorList>
    </citation>
    <scope>NUCLEOTIDE SEQUENCE [LARGE SCALE MRNA]</scope>
    <source>
        <strain>cv. Columbia</strain>
    </source>
</reference>
<reference key="4">
    <citation type="submission" date="2006-07" db="EMBL/GenBank/DDBJ databases">
        <title>Large-scale analysis of RIKEN Arabidopsis full-length (RAFL) cDNAs.</title>
        <authorList>
            <person name="Totoki Y."/>
            <person name="Seki M."/>
            <person name="Ishida J."/>
            <person name="Nakajima M."/>
            <person name="Enju A."/>
            <person name="Kamiya A."/>
            <person name="Narusaka M."/>
            <person name="Shin-i T."/>
            <person name="Nakagawa M."/>
            <person name="Sakamoto N."/>
            <person name="Oishi K."/>
            <person name="Kohara Y."/>
            <person name="Kobayashi M."/>
            <person name="Toyoda A."/>
            <person name="Sakaki Y."/>
            <person name="Sakurai T."/>
            <person name="Iida K."/>
            <person name="Akiyama K."/>
            <person name="Satou M."/>
            <person name="Toyoda T."/>
            <person name="Konagaya A."/>
            <person name="Carninci P."/>
            <person name="Kawai J."/>
            <person name="Hayashizaki Y."/>
            <person name="Shinozaki K."/>
        </authorList>
    </citation>
    <scope>NUCLEOTIDE SEQUENCE [LARGE SCALE MRNA]</scope>
    <source>
        <strain>cv. Columbia</strain>
    </source>
</reference>
<reference key="5">
    <citation type="journal article" date="2019" name="Nat. Commun.">
        <title>RST1 and RIPR connect the cytosolic RNA exosome to the Ski complex in Arabidopsis.</title>
        <authorList>
            <person name="Lange H."/>
            <person name="Ndecky S.Y.A."/>
            <person name="Gomez-Diaz C."/>
            <person name="Pflieger D."/>
            <person name="Butel N."/>
            <person name="Zumsteg J."/>
            <person name="Kuhn L."/>
            <person name="Piermaria C."/>
            <person name="Chicher J."/>
            <person name="Christie M."/>
            <person name="Karaaslan E.S."/>
            <person name="Lang P.L.M."/>
            <person name="Weigel D."/>
            <person name="Vaucheret H."/>
            <person name="Hammann P."/>
            <person name="Gagliardi D."/>
        </authorList>
    </citation>
    <scope>FUNCTION</scope>
    <scope>INTERACTION WITH RST1</scope>
    <scope>SUBCELLULAR LOCATION</scope>
    <scope>TISSUE SPECIFICITY</scope>
    <scope>DISRUPTION PHENOTYPE</scope>
</reference>
<reference key="6">
    <citation type="journal article" date="2020" name="Plant Physiol.">
        <title>CER16 inhibits post-transcriptional gene silencing of CER3 to regulate alkane biosynthesis.</title>
        <authorList>
            <person name="Yang X."/>
            <person name="Feng T."/>
            <person name="Li S."/>
            <person name="Zhao H."/>
            <person name="Zhao S."/>
            <person name="Ma C."/>
            <person name="Jenks M.A."/>
            <person name="Lue S."/>
        </authorList>
    </citation>
    <scope>FUNCTION</scope>
    <scope>SUBCELLULAR LOCATION</scope>
    <scope>DISRUPTION PHENOTYPE</scope>
</reference>
<keyword id="KW-0963">Cytoplasm</keyword>
<keyword id="KW-0256">Endoplasmic reticulum</keyword>
<keyword id="KW-1185">Reference proteome</keyword>
<name>CER16_ARATH</name>
<comment type="function">
    <text evidence="2 3">Together with RST1, acts as a cofactor of the cytoplasmic exosome and connects the cytosolic RNA exosome to the SKI complex (PubMed:31455787). Acts as a post-transcriptional gene silencing (PTGS) suppressor (PubMed:31455787, PubMed:31941670). CER16/RIPR can, like RST1 suppress the production of small interfering RNAs (siRNAs) from the CER3 locus, which is involved in cuticule membrane and wax production, and in the typhine and sporopollenin biosynthesis of pollen (PubMed:31455787, PubMed:31941670).</text>
</comment>
<comment type="subunit">
    <text evidence="2">Interacts with RST1.</text>
</comment>
<comment type="subcellular location">
    <subcellularLocation>
        <location evidence="2">Cytoplasm</location>
        <location evidence="2">Cytosol</location>
    </subcellularLocation>
    <subcellularLocation>
        <location evidence="3">Endoplasmic reticulum</location>
    </subcellularLocation>
</comment>
<comment type="tissue specificity">
    <text evidence="3">Expressed in taproots, lateral roots, root tips, leaf veins, cauline leaves, inflorescences, flowers, and siliques.</text>
</comment>
<comment type="disruption phenotype">
    <text evidence="2 3">Shrunken non viable seeds due to arrested embryo development when homozygous (PubMed:31455787). Alteration in cuticular waxes (PubMed:31455787, PubMed:31941670). Decreased production wax with dramatically fewer alkanes (PubMed:31941670).</text>
</comment>
<comment type="sequence caution" evidence="6">
    <conflict type="erroneous gene model prediction">
        <sequence resource="EMBL-CDS" id="BAB10982"/>
    </conflict>
</comment>
<dbReference type="EMBL" id="AB005239">
    <property type="protein sequence ID" value="BAB10982.1"/>
    <property type="status" value="ALT_SEQ"/>
    <property type="molecule type" value="Genomic_DNA"/>
</dbReference>
<dbReference type="EMBL" id="CP002688">
    <property type="protein sequence ID" value="AED95067.1"/>
    <property type="molecule type" value="Genomic_DNA"/>
</dbReference>
<dbReference type="EMBL" id="BT010142">
    <property type="protein sequence ID" value="AAQ22611.1"/>
    <property type="molecule type" value="mRNA"/>
</dbReference>
<dbReference type="EMBL" id="AK227605">
    <property type="protein sequence ID" value="BAE99596.1"/>
    <property type="molecule type" value="mRNA"/>
</dbReference>
<dbReference type="RefSeq" id="NP_199228.2">
    <property type="nucleotide sequence ID" value="NM_123782.6"/>
</dbReference>
<dbReference type="FunCoup" id="F4K8S5">
    <property type="interactions" value="1014"/>
</dbReference>
<dbReference type="STRING" id="3702.F4K8S5"/>
<dbReference type="iPTMnet" id="F4K8S5"/>
<dbReference type="PaxDb" id="3702-AT5G44150.1"/>
<dbReference type="ProteomicsDB" id="212156"/>
<dbReference type="EnsemblPlants" id="AT5G44150.1">
    <property type="protein sequence ID" value="AT5G44150.1"/>
    <property type="gene ID" value="AT5G44150"/>
</dbReference>
<dbReference type="GeneID" id="834438"/>
<dbReference type="Gramene" id="AT5G44150.1">
    <property type="protein sequence ID" value="AT5G44150.1"/>
    <property type="gene ID" value="AT5G44150"/>
</dbReference>
<dbReference type="KEGG" id="ath:AT5G44150"/>
<dbReference type="Araport" id="AT5G44150"/>
<dbReference type="TAIR" id="AT5G44150">
    <property type="gene designation" value="RIPR"/>
</dbReference>
<dbReference type="eggNOG" id="ENOG502QPUK">
    <property type="taxonomic scope" value="Eukaryota"/>
</dbReference>
<dbReference type="HOGENOM" id="CLU_034598_1_0_1"/>
<dbReference type="InParanoid" id="F4K8S5"/>
<dbReference type="OMA" id="ILSWMED"/>
<dbReference type="PRO" id="PR:F4K8S5"/>
<dbReference type="Proteomes" id="UP000006548">
    <property type="component" value="Chromosome 5"/>
</dbReference>
<dbReference type="ExpressionAtlas" id="F4K8S5">
    <property type="expression patterns" value="baseline and differential"/>
</dbReference>
<dbReference type="GO" id="GO:0005829">
    <property type="term" value="C:cytosol"/>
    <property type="evidence" value="ECO:0007669"/>
    <property type="project" value="UniProtKB-SubCell"/>
</dbReference>
<dbReference type="GO" id="GO:0005783">
    <property type="term" value="C:endoplasmic reticulum"/>
    <property type="evidence" value="ECO:0007669"/>
    <property type="project" value="UniProtKB-SubCell"/>
</dbReference>
<dbReference type="InterPro" id="IPR053342">
    <property type="entry name" value="Exosome_cofactor/PTGS_suppr"/>
</dbReference>
<dbReference type="PANTHER" id="PTHR37260">
    <property type="entry name" value="PHOSPHORELAY PROTEIN"/>
    <property type="match status" value="1"/>
</dbReference>
<dbReference type="PANTHER" id="PTHR37260:SF2">
    <property type="entry name" value="PROTEIN ECERIFERUM 16"/>
    <property type="match status" value="1"/>
</dbReference>
<accession>F4K8S5</accession>
<accession>Q7XA85</accession>
<accession>Q9FFH4</accession>
<sequence length="355" mass="39044">MDSKSLAKSKRAHTLHHSKKSHSVHKPKVPGVSEKNPEKLQGNQTKSPVQSRRVSALPSNWDRYDDELDAAEDSSISLHSDVIVPKSKGADYLHLISEAQAESNSKIENNLDCLSSLDDLLHDEFSRVVGSMISARGEGILSWMEDDNFVVEEDGSGSYQEPGFLSLNLNVLAKTLENVDLHERLYIDPDLLPLPELNTSQTKVSRNEEPSHSHIAQNDPIVVPGESSVREAESLDQVKDILILTDESEKSSAIEADLDLLLNSFSEAHTQPNPVASASGKSSAFETELDSLLKSHSSTEQFNKPGNPSDQKIHMTGFNDVLDDLLESTPVSIIPQSNQTSSKVLDDFDSWLDTI</sequence>
<protein>
    <recommendedName>
        <fullName evidence="5">Protein ECERIFERUM 16</fullName>
    </recommendedName>
    <alternativeName>
        <fullName evidence="4">RST1-intearcting protein</fullName>
    </alternativeName>
</protein>
<organism>
    <name type="scientific">Arabidopsis thaliana</name>
    <name type="common">Mouse-ear cress</name>
    <dbReference type="NCBI Taxonomy" id="3702"/>
    <lineage>
        <taxon>Eukaryota</taxon>
        <taxon>Viridiplantae</taxon>
        <taxon>Streptophyta</taxon>
        <taxon>Embryophyta</taxon>
        <taxon>Tracheophyta</taxon>
        <taxon>Spermatophyta</taxon>
        <taxon>Magnoliopsida</taxon>
        <taxon>eudicotyledons</taxon>
        <taxon>Gunneridae</taxon>
        <taxon>Pentapetalae</taxon>
        <taxon>rosids</taxon>
        <taxon>malvids</taxon>
        <taxon>Brassicales</taxon>
        <taxon>Brassicaceae</taxon>
        <taxon>Camelineae</taxon>
        <taxon>Arabidopsis</taxon>
    </lineage>
</organism>
<feature type="chain" id="PRO_0000454454" description="Protein ECERIFERUM 16">
    <location>
        <begin position="1"/>
        <end position="355"/>
    </location>
</feature>
<feature type="region of interest" description="Disordered" evidence="1">
    <location>
        <begin position="1"/>
        <end position="60"/>
    </location>
</feature>
<feature type="region of interest" description="Disordered" evidence="1">
    <location>
        <begin position="296"/>
        <end position="315"/>
    </location>
</feature>
<feature type="compositionally biased region" description="Basic residues" evidence="1">
    <location>
        <begin position="7"/>
        <end position="28"/>
    </location>
</feature>
<feature type="compositionally biased region" description="Polar residues" evidence="1">
    <location>
        <begin position="41"/>
        <end position="53"/>
    </location>
</feature>
<feature type="compositionally biased region" description="Polar residues" evidence="1">
    <location>
        <begin position="296"/>
        <end position="310"/>
    </location>
</feature>
<feature type="sequence conflict" description="In Ref. 3; AAQ22611 and 4; BAE99596." evidence="6" ref="3 4">
    <original>R</original>
    <variation>G</variation>
    <location>
        <position position="136"/>
    </location>
</feature>